<keyword id="KW-0002">3D-structure</keyword>
<keyword id="KW-0965">Cell junction</keyword>
<keyword id="KW-1003">Cell membrane</keyword>
<keyword id="KW-0963">Cytoplasm</keyword>
<keyword id="KW-0903">Direct protein sequencing</keyword>
<keyword id="KW-0967">Endosome</keyword>
<keyword id="KW-0342">GTP-binding</keyword>
<keyword id="KW-0378">Hydrolase</keyword>
<keyword id="KW-0449">Lipoprotein</keyword>
<keyword id="KW-0472">Membrane</keyword>
<keyword id="KW-0488">Methylation</keyword>
<keyword id="KW-0524">Neurogenesis</keyword>
<keyword id="KW-0547">Nucleotide-binding</keyword>
<keyword id="KW-0636">Prenylation</keyword>
<keyword id="KW-1267">Proteomics identification</keyword>
<keyword id="KW-1185">Reference proteome</keyword>
<keyword id="KW-0043">Tumor suppressor</keyword>
<evidence type="ECO:0000250" key="1"/>
<evidence type="ECO:0000250" key="2">
    <source>
        <dbReference type="UniProtKB" id="P61224"/>
    </source>
</evidence>
<evidence type="ECO:0000250" key="3">
    <source>
        <dbReference type="UniProtKB" id="P62835"/>
    </source>
</evidence>
<evidence type="ECO:0000269" key="4">
    <source>
    </source>
</evidence>
<evidence type="ECO:0000269" key="5">
    <source>
    </source>
</evidence>
<evidence type="ECO:0000269" key="6">
    <source>
    </source>
</evidence>
<evidence type="ECO:0000269" key="7">
    <source>
    </source>
</evidence>
<evidence type="ECO:0000269" key="8">
    <source>
    </source>
</evidence>
<evidence type="ECO:0000269" key="9">
    <source>
    </source>
</evidence>
<evidence type="ECO:0000269" key="10">
    <source>
    </source>
</evidence>
<evidence type="ECO:0000269" key="11">
    <source>
    </source>
</evidence>
<evidence type="ECO:0000269" key="12">
    <source>
    </source>
</evidence>
<evidence type="ECO:0000269" key="13">
    <source>
    </source>
</evidence>
<evidence type="ECO:0000269" key="14">
    <source>
    </source>
</evidence>
<evidence type="ECO:0000269" key="15">
    <source>
    </source>
</evidence>
<evidence type="ECO:0000269" key="16">
    <source>
    </source>
</evidence>
<evidence type="ECO:0000305" key="17"/>
<evidence type="ECO:0007829" key="18">
    <source>
        <dbReference type="PDB" id="1GUA"/>
    </source>
</evidence>
<evidence type="ECO:0007829" key="19">
    <source>
        <dbReference type="PDB" id="4KVG"/>
    </source>
</evidence>
<accession>P62834</accession>
<accession>P10113</accession>
<gene>
    <name type="primary">RAP1A</name>
    <name type="synonym">KREV1</name>
</gene>
<organism>
    <name type="scientific">Homo sapiens</name>
    <name type="common">Human</name>
    <dbReference type="NCBI Taxonomy" id="9606"/>
    <lineage>
        <taxon>Eukaryota</taxon>
        <taxon>Metazoa</taxon>
        <taxon>Chordata</taxon>
        <taxon>Craniata</taxon>
        <taxon>Vertebrata</taxon>
        <taxon>Euteleostomi</taxon>
        <taxon>Mammalia</taxon>
        <taxon>Eutheria</taxon>
        <taxon>Euarchontoglires</taxon>
        <taxon>Primates</taxon>
        <taxon>Haplorrhini</taxon>
        <taxon>Catarrhini</taxon>
        <taxon>Hominidae</taxon>
        <taxon>Homo</taxon>
    </lineage>
</organism>
<reference key="1">
    <citation type="journal article" date="1988" name="Oncogene">
        <title>Human cDNAs rap1 and rap2 homologous to the Drosophila gene Dras3 encode proteins closely related to ras in the 'effector' region.</title>
        <authorList>
            <person name="Pizon V."/>
            <person name="Chardin P."/>
            <person name="Lerosey I."/>
            <person name="Olofsson B."/>
            <person name="Tavitian A."/>
        </authorList>
    </citation>
    <scope>NUCLEOTIDE SEQUENCE [MRNA]</scope>
</reference>
<reference key="2">
    <citation type="submission" date="1989-02" db="EMBL/GenBank/DDBJ databases">
        <authorList>
            <person name="Pizon V."/>
        </authorList>
    </citation>
    <scope>SEQUENCE REVISION TO 3</scope>
</reference>
<reference key="3">
    <citation type="submission" date="2002-03" db="EMBL/GenBank/DDBJ databases">
        <title>cDNA clones of human proteins involved in signal transduction sequenced by the Guthrie cDNA resource center (www.cdna.org).</title>
        <authorList>
            <person name="Puhl H.L. III"/>
            <person name="Ikeda S.R."/>
            <person name="Aronstam R.S."/>
        </authorList>
    </citation>
    <scope>NUCLEOTIDE SEQUENCE [LARGE SCALE MRNA]</scope>
    <source>
        <tissue>Brain</tissue>
    </source>
</reference>
<reference key="4">
    <citation type="journal article" date="2006" name="Nature">
        <title>The DNA sequence and biological annotation of human chromosome 1.</title>
        <authorList>
            <person name="Gregory S.G."/>
            <person name="Barlow K.F."/>
            <person name="McLay K.E."/>
            <person name="Kaul R."/>
            <person name="Swarbreck D."/>
            <person name="Dunham A."/>
            <person name="Scott C.E."/>
            <person name="Howe K.L."/>
            <person name="Woodfine K."/>
            <person name="Spencer C.C.A."/>
            <person name="Jones M.C."/>
            <person name="Gillson C."/>
            <person name="Searle S."/>
            <person name="Zhou Y."/>
            <person name="Kokocinski F."/>
            <person name="McDonald L."/>
            <person name="Evans R."/>
            <person name="Phillips K."/>
            <person name="Atkinson A."/>
            <person name="Cooper R."/>
            <person name="Jones C."/>
            <person name="Hall R.E."/>
            <person name="Andrews T.D."/>
            <person name="Lloyd C."/>
            <person name="Ainscough R."/>
            <person name="Almeida J.P."/>
            <person name="Ambrose K.D."/>
            <person name="Anderson F."/>
            <person name="Andrew R.W."/>
            <person name="Ashwell R.I.S."/>
            <person name="Aubin K."/>
            <person name="Babbage A.K."/>
            <person name="Bagguley C.L."/>
            <person name="Bailey J."/>
            <person name="Beasley H."/>
            <person name="Bethel G."/>
            <person name="Bird C.P."/>
            <person name="Bray-Allen S."/>
            <person name="Brown J.Y."/>
            <person name="Brown A.J."/>
            <person name="Buckley D."/>
            <person name="Burton J."/>
            <person name="Bye J."/>
            <person name="Carder C."/>
            <person name="Chapman J.C."/>
            <person name="Clark S.Y."/>
            <person name="Clarke G."/>
            <person name="Clee C."/>
            <person name="Cobley V."/>
            <person name="Collier R.E."/>
            <person name="Corby N."/>
            <person name="Coville G.J."/>
            <person name="Davies J."/>
            <person name="Deadman R."/>
            <person name="Dunn M."/>
            <person name="Earthrowl M."/>
            <person name="Ellington A.G."/>
            <person name="Errington H."/>
            <person name="Frankish A."/>
            <person name="Frankland J."/>
            <person name="French L."/>
            <person name="Garner P."/>
            <person name="Garnett J."/>
            <person name="Gay L."/>
            <person name="Ghori M.R.J."/>
            <person name="Gibson R."/>
            <person name="Gilby L.M."/>
            <person name="Gillett W."/>
            <person name="Glithero R.J."/>
            <person name="Grafham D.V."/>
            <person name="Griffiths C."/>
            <person name="Griffiths-Jones S."/>
            <person name="Grocock R."/>
            <person name="Hammond S."/>
            <person name="Harrison E.S.I."/>
            <person name="Hart E."/>
            <person name="Haugen E."/>
            <person name="Heath P.D."/>
            <person name="Holmes S."/>
            <person name="Holt K."/>
            <person name="Howden P.J."/>
            <person name="Hunt A.R."/>
            <person name="Hunt S.E."/>
            <person name="Hunter G."/>
            <person name="Isherwood J."/>
            <person name="James R."/>
            <person name="Johnson C."/>
            <person name="Johnson D."/>
            <person name="Joy A."/>
            <person name="Kay M."/>
            <person name="Kershaw J.K."/>
            <person name="Kibukawa M."/>
            <person name="Kimberley A.M."/>
            <person name="King A."/>
            <person name="Knights A.J."/>
            <person name="Lad H."/>
            <person name="Laird G."/>
            <person name="Lawlor S."/>
            <person name="Leongamornlert D.A."/>
            <person name="Lloyd D.M."/>
            <person name="Loveland J."/>
            <person name="Lovell J."/>
            <person name="Lush M.J."/>
            <person name="Lyne R."/>
            <person name="Martin S."/>
            <person name="Mashreghi-Mohammadi M."/>
            <person name="Matthews L."/>
            <person name="Matthews N.S.W."/>
            <person name="McLaren S."/>
            <person name="Milne S."/>
            <person name="Mistry S."/>
            <person name="Moore M.J.F."/>
            <person name="Nickerson T."/>
            <person name="O'Dell C.N."/>
            <person name="Oliver K."/>
            <person name="Palmeiri A."/>
            <person name="Palmer S.A."/>
            <person name="Parker A."/>
            <person name="Patel D."/>
            <person name="Pearce A.V."/>
            <person name="Peck A.I."/>
            <person name="Pelan S."/>
            <person name="Phelps K."/>
            <person name="Phillimore B.J."/>
            <person name="Plumb R."/>
            <person name="Rajan J."/>
            <person name="Raymond C."/>
            <person name="Rouse G."/>
            <person name="Saenphimmachak C."/>
            <person name="Sehra H.K."/>
            <person name="Sheridan E."/>
            <person name="Shownkeen R."/>
            <person name="Sims S."/>
            <person name="Skuce C.D."/>
            <person name="Smith M."/>
            <person name="Steward C."/>
            <person name="Subramanian S."/>
            <person name="Sycamore N."/>
            <person name="Tracey A."/>
            <person name="Tromans A."/>
            <person name="Van Helmond Z."/>
            <person name="Wall M."/>
            <person name="Wallis J.M."/>
            <person name="White S."/>
            <person name="Whitehead S.L."/>
            <person name="Wilkinson J.E."/>
            <person name="Willey D.L."/>
            <person name="Williams H."/>
            <person name="Wilming L."/>
            <person name="Wray P.W."/>
            <person name="Wu Z."/>
            <person name="Coulson A."/>
            <person name="Vaudin M."/>
            <person name="Sulston J.E."/>
            <person name="Durbin R.M."/>
            <person name="Hubbard T."/>
            <person name="Wooster R."/>
            <person name="Dunham I."/>
            <person name="Carter N.P."/>
            <person name="McVean G."/>
            <person name="Ross M.T."/>
            <person name="Harrow J."/>
            <person name="Olson M.V."/>
            <person name="Beck S."/>
            <person name="Rogers J."/>
            <person name="Bentley D.R."/>
        </authorList>
    </citation>
    <scope>NUCLEOTIDE SEQUENCE [LARGE SCALE GENOMIC DNA]</scope>
</reference>
<reference key="5">
    <citation type="journal article" date="2004" name="Genome Res.">
        <title>The status, quality, and expansion of the NIH full-length cDNA project: the Mammalian Gene Collection (MGC).</title>
        <authorList>
            <consortium name="The MGC Project Team"/>
        </authorList>
    </citation>
    <scope>NUCLEOTIDE SEQUENCE [LARGE SCALE MRNA]</scope>
    <source>
        <tissue>Skin</tissue>
    </source>
</reference>
<reference key="6">
    <citation type="journal article" date="1989" name="J. Biol. Chem.">
        <title>Purification, identification, and characterization of two GTP-binding proteins with molecular weights of 25,000 and 21,000 in human platelet cytosol. One is the rap1/smg21/Krev-1 protein and the other is a novel GTP-binding protein.</title>
        <authorList>
            <person name="Nagata K."/>
            <person name="Itoh H."/>
            <person name="Katada T."/>
            <person name="Takenaka K."/>
            <person name="Ui M."/>
            <person name="Kaziro Y."/>
            <person name="Nozawa Y."/>
        </authorList>
    </citation>
    <scope>PARTIAL PROTEIN SEQUENCE</scope>
    <source>
        <tissue>Platelet</tissue>
    </source>
</reference>
<reference key="7">
    <citation type="journal article" date="1988" name="J. Biol. Chem.">
        <title>Purification and characterization of the 22,000-dalton GTP-binding protein substrate for ADP-ribosylation by botulinum toxin, G22K.</title>
        <authorList>
            <person name="Bokoch G.M."/>
            <person name="Parkos C.A."/>
            <person name="Mumby S.M."/>
        </authorList>
    </citation>
    <scope>PROTEIN SEQUENCE OF 1-35</scope>
</reference>
<reference key="8">
    <citation type="journal article" date="1988" name="Biochem. Biophys. Res. Commun.">
        <title>Identification of a platelet Mr 22,000 GTP-binding protein as the novel smg-21 gene product having the same putative effector domain as the ras gene products.</title>
        <authorList>
            <person name="Ohmori T."/>
            <person name="Kikuchi A."/>
            <person name="Yamamoto K."/>
            <person name="Kawata M."/>
            <person name="Kondo J."/>
            <person name="Takai Y."/>
        </authorList>
    </citation>
    <scope>PROTEIN SEQUENCE OF 1-5; 17-24; 32-42 AND 152-168</scope>
</reference>
<reference key="9">
    <citation type="journal article" date="1991" name="Mol. Cell. Biol.">
        <title>The COOH-terminal domain of the Rap1A (Krev-1) protein is isoprenylated and supports transformation by an H-Ras:Rap1A chimeric protein.</title>
        <authorList>
            <person name="Buss J.E."/>
            <person name="Quilliam L.A."/>
            <person name="Kato K."/>
            <person name="Casey P.J."/>
            <person name="Solski P.A."/>
            <person name="Wong G."/>
            <person name="Clark R."/>
            <person name="McCormick F."/>
            <person name="Bokoch G.M."/>
            <person name="Der C.J."/>
        </authorList>
    </citation>
    <scope>ISOPRENYLATION AT CYS-181</scope>
    <scope>METHYLATION AT CYS-181</scope>
</reference>
<reference key="10">
    <citation type="journal article" date="1999" name="J. Biol. Chem.">
        <title>RA-GEF, a novel Rap1A guanine nucleotide exchange factor containing a Ras/Rap1A-associating domain, is conserved between nematode and humans.</title>
        <authorList>
            <person name="Liao Y."/>
            <person name="Kariya K."/>
            <person name="Hu C.-D."/>
            <person name="Shibatohge M."/>
            <person name="Goshima M."/>
            <person name="Okada T."/>
            <person name="Watari Y."/>
            <person name="Gao X."/>
            <person name="Jin T.-G."/>
            <person name="Yamawaki-Kataoka Y."/>
            <person name="Kataoka T."/>
        </authorList>
    </citation>
    <scope>INTERACTION WITH RAPGEF2</scope>
</reference>
<reference key="11">
    <citation type="journal article" date="2001" name="J. Biol. Chem.">
        <title>Regulation of a novel human phospholipase C, PLCepsilon, through membrane targeting by Ras.</title>
        <authorList>
            <person name="Song C."/>
            <person name="Hu C.-D."/>
            <person name="Masago M."/>
            <person name="Kariya K."/>
            <person name="Yamawaki-Kataoka Y."/>
            <person name="Shibatohge M."/>
            <person name="Wu D."/>
            <person name="Satoh T."/>
            <person name="Kataoka T."/>
        </authorList>
    </citation>
    <scope>INTERACTION WITH PLCE1</scope>
</reference>
<reference key="12">
    <citation type="journal article" date="2001" name="J. Biol. Chem.">
        <title>RA-GEF-1, a guanine nucleotide exchange factor for Rap1, is activated by translocation induced by association with Rap1*GTP and enhances Rap1-dependent B-Raf activation.</title>
        <authorList>
            <person name="Liao Y."/>
            <person name="Satoh T."/>
            <person name="Gao X."/>
            <person name="Jin T.G."/>
            <person name="Hu C.D."/>
            <person name="Kataoka T."/>
        </authorList>
    </citation>
    <scope>INTERACTION WITH RAPGEF2</scope>
    <scope>SUBCELLULAR LOCATION</scope>
</reference>
<reference key="13">
    <citation type="journal article" date="2002" name="Oncogene">
        <title>Differential roles of Ras and Rap1 in growth factor-dependent activation of phospholipase C epsilon.</title>
        <authorList>
            <person name="Song C."/>
            <person name="Satoh T."/>
            <person name="Edamatsu H."/>
            <person name="Wu D."/>
            <person name="Tadano M."/>
            <person name="Gao X."/>
            <person name="Kataoka T."/>
        </authorList>
    </citation>
    <scope>INTERACTION WITH PLCE1</scope>
</reference>
<reference key="14">
    <citation type="journal article" date="2007" name="FEBS J.">
        <title>Krit 1 interactions with microtubules and membranes are regulated by Rap1 and integrin cytoplasmic domain associated protein-1.</title>
        <authorList>
            <person name="Beraud-Dufour S."/>
            <person name="Gautier R."/>
            <person name="Albiges-Rizo C."/>
            <person name="Chardin P."/>
            <person name="Faurobert E."/>
        </authorList>
    </citation>
    <scope>FUNCTION</scope>
    <scope>IDENTIFICATION IN A COMPLEX WITH ITGB1BP1 AND KRIT1</scope>
    <scope>INTERACTION WITH KRIT1</scope>
</reference>
<reference key="15">
    <citation type="journal article" date="2007" name="Genes Dev.">
        <title>A Rap GTPase interactor, RADIL, mediates migration of neural crest precursors.</title>
        <authorList>
            <person name="Smolen G.A."/>
            <person name="Schott B.J."/>
            <person name="Stewart R.A."/>
            <person name="Diederichs S."/>
            <person name="Muir B."/>
            <person name="Provencher H.L."/>
            <person name="Look A.T."/>
            <person name="Sgroi D.C."/>
            <person name="Peterson R.T."/>
            <person name="Haber D.A."/>
        </authorList>
    </citation>
    <scope>INTERACTION WITH RADIL</scope>
</reference>
<reference key="16">
    <citation type="journal article" date="2007" name="Genomics">
        <title>Identification of three novel proteins (SGSM1, 2, 3) which modulate small G protein (RAP and RAB)-mediated signaling pathway.</title>
        <authorList>
            <person name="Yang H."/>
            <person name="Sasaki T."/>
            <person name="Minoshima S."/>
            <person name="Shimizu N."/>
        </authorList>
    </citation>
    <scope>INTERACTION WITH SGSM1; SGSM2 AND SGSM3</scope>
</reference>
<reference key="17">
    <citation type="journal article" date="2010" name="J. Biol. Chem.">
        <title>Splice variants of SmgGDS control small GTPase prenylation and membrane localization.</title>
        <authorList>
            <person name="Berg T.J."/>
            <person name="Gastonguay A.J."/>
            <person name="Lorimer E.L."/>
            <person name="Kuhnmuench J.R."/>
            <person name="Li R."/>
            <person name="Fields A.P."/>
            <person name="Williams C.L."/>
        </authorList>
    </citation>
    <scope>INTERACTION WITH RAP1GDS1</scope>
</reference>
<reference key="18">
    <citation type="journal article" date="2011" name="BMC Syst. Biol.">
        <title>Initial characterization of the human central proteome.</title>
        <authorList>
            <person name="Burkard T.R."/>
            <person name="Planyavsky M."/>
            <person name="Kaupe I."/>
            <person name="Breitwieser F.P."/>
            <person name="Buerckstuemmer T."/>
            <person name="Bennett K.L."/>
            <person name="Superti-Furga G."/>
            <person name="Colinge J."/>
        </authorList>
    </citation>
    <scope>IDENTIFICATION BY MASS SPECTROMETRY [LARGE SCALE ANALYSIS]</scope>
</reference>
<reference key="19">
    <citation type="journal article" date="2011" name="Cell. Signal.">
        <title>Epac1 and PDZ-GEF cooperate in Rap1 mediated endothelial junction control.</title>
        <authorList>
            <person name="Pannekoek W.J."/>
            <person name="van Dijk J.J."/>
            <person name="Chan O.Y."/>
            <person name="Huveneers S."/>
            <person name="Linnemann J.R."/>
            <person name="Spanjaard E."/>
            <person name="Brouwer P.M."/>
            <person name="van der Meer A.J."/>
            <person name="Zwartkruis F.J."/>
            <person name="Rehmann H."/>
            <person name="de Rooij J."/>
            <person name="Bos J.L."/>
        </authorList>
    </citation>
    <scope>FUNCTION</scope>
</reference>
<reference key="20">
    <citation type="journal article" date="2014" name="Mol. Biol. Cell">
        <title>Plakophilin 3 mediates Rap1-dependent desmosome assembly and adherens junction maturation.</title>
        <authorList>
            <person name="Todorovic V."/>
            <person name="Koetsier J.L."/>
            <person name="Godsel L.M."/>
            <person name="Green K.J."/>
        </authorList>
    </citation>
    <scope>FUNCTION</scope>
    <scope>IDENTIFICATION IN A COMPLEX WITH PKP3 AND CDH1</scope>
    <scope>INTERACTION WITH PKP3 AND CDH1</scope>
</reference>
<reference key="21">
    <citation type="journal article" date="2015" name="Proteomics">
        <title>N-terminome analysis of the human mitochondrial proteome.</title>
        <authorList>
            <person name="Vaca Jacome A.S."/>
            <person name="Rabilloud T."/>
            <person name="Schaeffer-Reiss C."/>
            <person name="Rompais M."/>
            <person name="Ayoub D."/>
            <person name="Lane L."/>
            <person name="Bairoch A."/>
            <person name="Van Dorsselaer A."/>
            <person name="Carapito C."/>
        </authorList>
    </citation>
    <scope>IDENTIFICATION BY MASS SPECTROMETRY [LARGE SCALE ANALYSIS]</scope>
</reference>
<reference key="22">
    <citation type="journal article" date="1995" name="Nature">
        <title>The 2.2 A crystal structure of the Ras-binding domain of the serine/threonine kinase c-Raf1 in complex with Rap1A and a GTP analogue.</title>
        <authorList>
            <person name="Nassar N."/>
            <person name="Horn G."/>
            <person name="Herrmann C."/>
            <person name="Scherer A."/>
            <person name="McCormick F."/>
            <person name="Wittinghofer A."/>
        </authorList>
    </citation>
    <scope>X-RAY CRYSTALLOGRAPHY (1.90 ANGSTROMS) OF 1-167 IN COMPLEX WITH GTP</scope>
</reference>
<reference key="23">
    <citation type="journal article" date="1996" name="Nat. Struct. Biol.">
        <title>Ras/Rap effector specificity determined by charge reversal.</title>
        <authorList>
            <person name="Nassar N."/>
            <person name="Horn G."/>
            <person name="Herrmann C."/>
            <person name="Block C."/>
            <person name="Janknecht R."/>
            <person name="Wittinghofer A."/>
        </authorList>
    </citation>
    <scope>X-RAY CRYSTALLOGRAPHY (2.00 ANGSTROMS) OF 1-167 IN COMPLEX WITH GTP ANALOG</scope>
</reference>
<feature type="chain" id="PRO_0000030199" description="Ras-related protein Rap-1A">
    <location>
        <begin position="1"/>
        <end position="181"/>
    </location>
</feature>
<feature type="propeptide" id="PRO_0000030200" description="Removed in mature form">
    <location>
        <begin position="182"/>
        <end position="184"/>
    </location>
</feature>
<feature type="short sequence motif" description="Effector region" evidence="17">
    <location>
        <begin position="32"/>
        <end position="40"/>
    </location>
</feature>
<feature type="binding site" evidence="15 16">
    <location>
        <begin position="10"/>
        <end position="18"/>
    </location>
    <ligand>
        <name>GTP</name>
        <dbReference type="ChEBI" id="CHEBI:37565"/>
    </ligand>
</feature>
<feature type="binding site" evidence="15 16">
    <location>
        <begin position="29"/>
        <end position="35"/>
    </location>
    <ligand>
        <name>GTP</name>
        <dbReference type="ChEBI" id="CHEBI:37565"/>
    </ligand>
</feature>
<feature type="binding site" evidence="15 16">
    <location>
        <position position="60"/>
    </location>
    <ligand>
        <name>GTP</name>
        <dbReference type="ChEBI" id="CHEBI:37565"/>
    </ligand>
</feature>
<feature type="binding site" evidence="15 16">
    <location>
        <begin position="116"/>
        <end position="119"/>
    </location>
    <ligand>
        <name>GTP</name>
        <dbReference type="ChEBI" id="CHEBI:37565"/>
    </ligand>
</feature>
<feature type="modified residue" description="Cysteine methyl ester" evidence="11">
    <location>
        <position position="181"/>
    </location>
</feature>
<feature type="lipid moiety-binding region" description="S-geranylgeranyl cysteine" evidence="11">
    <location>
        <position position="181"/>
    </location>
</feature>
<feature type="strand" evidence="19">
    <location>
        <begin position="2"/>
        <end position="9"/>
    </location>
</feature>
<feature type="helix" evidence="19">
    <location>
        <begin position="16"/>
        <end position="25"/>
    </location>
</feature>
<feature type="strand" evidence="19">
    <location>
        <begin position="36"/>
        <end position="46"/>
    </location>
</feature>
<feature type="strand" evidence="19">
    <location>
        <begin position="49"/>
        <end position="58"/>
    </location>
</feature>
<feature type="helix" evidence="19">
    <location>
        <begin position="66"/>
        <end position="74"/>
    </location>
</feature>
<feature type="strand" evidence="19">
    <location>
        <begin position="76"/>
        <end position="83"/>
    </location>
</feature>
<feature type="helix" evidence="19">
    <location>
        <begin position="87"/>
        <end position="91"/>
    </location>
</feature>
<feature type="helix" evidence="19">
    <location>
        <begin position="93"/>
        <end position="104"/>
    </location>
</feature>
<feature type="strand" evidence="19">
    <location>
        <begin position="111"/>
        <end position="116"/>
    </location>
</feature>
<feature type="helix" evidence="19">
    <location>
        <begin position="121"/>
        <end position="123"/>
    </location>
</feature>
<feature type="helix" evidence="19">
    <location>
        <begin position="128"/>
        <end position="137"/>
    </location>
</feature>
<feature type="turn" evidence="18">
    <location>
        <begin position="138"/>
        <end position="140"/>
    </location>
</feature>
<feature type="strand" evidence="19">
    <location>
        <begin position="142"/>
        <end position="145"/>
    </location>
</feature>
<feature type="turn" evidence="19">
    <location>
        <begin position="148"/>
        <end position="150"/>
    </location>
</feature>
<feature type="helix" evidence="19">
    <location>
        <begin position="154"/>
        <end position="166"/>
    </location>
</feature>
<proteinExistence type="evidence at protein level"/>
<dbReference type="EC" id="3.6.5.2" evidence="2"/>
<dbReference type="EMBL" id="X12533">
    <property type="protein sequence ID" value="CAA31051.1"/>
    <property type="molecule type" value="mRNA"/>
</dbReference>
<dbReference type="EMBL" id="M22995">
    <property type="protein sequence ID" value="AAA36150.1"/>
    <property type="molecule type" value="mRNA"/>
</dbReference>
<dbReference type="EMBL" id="AF493912">
    <property type="protein sequence ID" value="AAM12626.1"/>
    <property type="molecule type" value="mRNA"/>
</dbReference>
<dbReference type="EMBL" id="AL049557">
    <property type="status" value="NOT_ANNOTATED_CDS"/>
    <property type="molecule type" value="Genomic_DNA"/>
</dbReference>
<dbReference type="EMBL" id="BC014086">
    <property type="protein sequence ID" value="AAH14086.1"/>
    <property type="molecule type" value="mRNA"/>
</dbReference>
<dbReference type="CCDS" id="CCDS840.1"/>
<dbReference type="PIR" id="A32342">
    <property type="entry name" value="A32342"/>
</dbReference>
<dbReference type="RefSeq" id="NP_001010935.1">
    <property type="nucleotide sequence ID" value="NM_001010935.3"/>
</dbReference>
<dbReference type="RefSeq" id="NP_001278825.1">
    <property type="nucleotide sequence ID" value="NM_001291896.3"/>
</dbReference>
<dbReference type="RefSeq" id="NP_001357145.1">
    <property type="nucleotide sequence ID" value="NM_001370216.2"/>
</dbReference>
<dbReference type="RefSeq" id="NP_001357146.1">
    <property type="nucleotide sequence ID" value="NM_001370217.2"/>
</dbReference>
<dbReference type="RefSeq" id="NP_001380995.1">
    <property type="nucleotide sequence ID" value="NM_001394066.1"/>
</dbReference>
<dbReference type="RefSeq" id="NP_002875.1">
    <property type="nucleotide sequence ID" value="NM_002884.4"/>
</dbReference>
<dbReference type="RefSeq" id="XP_016857451.1">
    <property type="nucleotide sequence ID" value="XM_017001962.1"/>
</dbReference>
<dbReference type="RefSeq" id="XP_016857452.1">
    <property type="nucleotide sequence ID" value="XM_017001963.1"/>
</dbReference>
<dbReference type="RefSeq" id="XP_016857453.1">
    <property type="nucleotide sequence ID" value="XM_017001964.1"/>
</dbReference>
<dbReference type="PDB" id="1C1Y">
    <property type="method" value="X-ray"/>
    <property type="resolution" value="1.90 A"/>
    <property type="chains" value="A=1-167"/>
</dbReference>
<dbReference type="PDB" id="1GUA">
    <property type="method" value="X-ray"/>
    <property type="resolution" value="2.00 A"/>
    <property type="chains" value="A=1-167"/>
</dbReference>
<dbReference type="PDB" id="3KUC">
    <property type="method" value="X-ray"/>
    <property type="resolution" value="1.92 A"/>
    <property type="chains" value="A=1-167"/>
</dbReference>
<dbReference type="PDB" id="4KVG">
    <property type="method" value="X-ray"/>
    <property type="resolution" value="1.65 A"/>
    <property type="chains" value="A/C=1-167"/>
</dbReference>
<dbReference type="PDBsum" id="1C1Y"/>
<dbReference type="PDBsum" id="1GUA"/>
<dbReference type="PDBsum" id="3KUC"/>
<dbReference type="PDBsum" id="4KVG"/>
<dbReference type="SMR" id="P62834"/>
<dbReference type="BioGRID" id="111841">
    <property type="interactions" value="169"/>
</dbReference>
<dbReference type="CORUM" id="P62834"/>
<dbReference type="DIP" id="DIP-29106N"/>
<dbReference type="FunCoup" id="P62834">
    <property type="interactions" value="2393"/>
</dbReference>
<dbReference type="IntAct" id="P62834">
    <property type="interactions" value="73"/>
</dbReference>
<dbReference type="MINT" id="P62834"/>
<dbReference type="STRING" id="9606.ENSP00000358723"/>
<dbReference type="BindingDB" id="P62834"/>
<dbReference type="ChEMBL" id="CHEMBL1255139"/>
<dbReference type="GlyGen" id="P62834">
    <property type="glycosylation" value="1 site, 1 O-linked glycan (1 site)"/>
</dbReference>
<dbReference type="iPTMnet" id="P62834"/>
<dbReference type="PhosphoSitePlus" id="P62834"/>
<dbReference type="SwissPalm" id="P62834"/>
<dbReference type="BioMuta" id="RAP1A"/>
<dbReference type="DMDM" id="51338607"/>
<dbReference type="OGP" id="P62834"/>
<dbReference type="jPOST" id="P62834"/>
<dbReference type="MassIVE" id="P62834"/>
<dbReference type="PaxDb" id="9606-ENSP00000358723"/>
<dbReference type="PeptideAtlas" id="P62834"/>
<dbReference type="PRIDE" id="P62834"/>
<dbReference type="ProteomicsDB" id="57431"/>
<dbReference type="Pumba" id="P62834"/>
<dbReference type="TopDownProteomics" id="P62834"/>
<dbReference type="Antibodypedia" id="4330">
    <property type="antibodies" value="461 antibodies from 36 providers"/>
</dbReference>
<dbReference type="DNASU" id="5906"/>
<dbReference type="Ensembl" id="ENST00000356415.5">
    <property type="protein sequence ID" value="ENSP00000348786.1"/>
    <property type="gene ID" value="ENSG00000116473.15"/>
</dbReference>
<dbReference type="Ensembl" id="ENST00000369709.4">
    <property type="protein sequence ID" value="ENSP00000358723.3"/>
    <property type="gene ID" value="ENSG00000116473.15"/>
</dbReference>
<dbReference type="Ensembl" id="ENST00000687939.1">
    <property type="protein sequence ID" value="ENSP00000509234.1"/>
    <property type="gene ID" value="ENSG00000116473.15"/>
</dbReference>
<dbReference type="GeneID" id="5906"/>
<dbReference type="KEGG" id="hsa:5906"/>
<dbReference type="MANE-Select" id="ENST00000369709.4">
    <property type="protein sequence ID" value="ENSP00000358723.3"/>
    <property type="RefSeq nucleotide sequence ID" value="NM_002884.4"/>
    <property type="RefSeq protein sequence ID" value="NP_002875.1"/>
</dbReference>
<dbReference type="UCSC" id="uc001ebi.4">
    <property type="organism name" value="human"/>
</dbReference>
<dbReference type="AGR" id="HGNC:9855"/>
<dbReference type="CTD" id="5906"/>
<dbReference type="DisGeNET" id="5906"/>
<dbReference type="GeneCards" id="RAP1A"/>
<dbReference type="HGNC" id="HGNC:9855">
    <property type="gene designation" value="RAP1A"/>
</dbReference>
<dbReference type="HPA" id="ENSG00000116473">
    <property type="expression patterns" value="Low tissue specificity"/>
</dbReference>
<dbReference type="MalaCards" id="RAP1A"/>
<dbReference type="MIM" id="179520">
    <property type="type" value="gene"/>
</dbReference>
<dbReference type="neXtProt" id="NX_P62834"/>
<dbReference type="OpenTargets" id="ENSG00000116473"/>
<dbReference type="PharmGKB" id="PA34217"/>
<dbReference type="VEuPathDB" id="HostDB:ENSG00000116473"/>
<dbReference type="eggNOG" id="KOG0395">
    <property type="taxonomic scope" value="Eukaryota"/>
</dbReference>
<dbReference type="GeneTree" id="ENSGT00940000160251"/>
<dbReference type="HOGENOM" id="CLU_041217_9_8_1"/>
<dbReference type="InParanoid" id="P62834"/>
<dbReference type="OMA" id="EYKLVVM"/>
<dbReference type="OrthoDB" id="5976022at2759"/>
<dbReference type="PAN-GO" id="P62834">
    <property type="GO annotations" value="7 GO annotations based on evolutionary models"/>
</dbReference>
<dbReference type="PhylomeDB" id="P62834"/>
<dbReference type="TreeFam" id="TF313014"/>
<dbReference type="PathwayCommons" id="P62834"/>
<dbReference type="Reactome" id="R-HSA-170968">
    <property type="pathway name" value="Frs2-mediated activation"/>
</dbReference>
<dbReference type="Reactome" id="R-HSA-170984">
    <property type="pathway name" value="ARMS-mediated activation"/>
</dbReference>
<dbReference type="Reactome" id="R-HSA-354192">
    <property type="pathway name" value="Integrin signaling"/>
</dbReference>
<dbReference type="Reactome" id="R-HSA-354194">
    <property type="pathway name" value="GRB2:SOS provides linkage to MAPK signaling for Integrins"/>
</dbReference>
<dbReference type="Reactome" id="R-HSA-372708">
    <property type="pathway name" value="p130Cas linkage to MAPK signaling for integrins"/>
</dbReference>
<dbReference type="Reactome" id="R-HSA-381676">
    <property type="pathway name" value="Glucagon-like Peptide-1 (GLP1) regulates insulin secretion"/>
</dbReference>
<dbReference type="Reactome" id="R-HSA-392517">
    <property type="pathway name" value="Rap1 signalling"/>
</dbReference>
<dbReference type="Reactome" id="R-HSA-5674135">
    <property type="pathway name" value="MAP2K and MAPK activation"/>
</dbReference>
<dbReference type="Reactome" id="R-HSA-6798695">
    <property type="pathway name" value="Neutrophil degranulation"/>
</dbReference>
<dbReference type="Reactome" id="R-HSA-6802946">
    <property type="pathway name" value="Signaling by moderate kinase activity BRAF mutants"/>
</dbReference>
<dbReference type="Reactome" id="R-HSA-6802948">
    <property type="pathway name" value="Signaling by high-kinase activity BRAF mutants"/>
</dbReference>
<dbReference type="Reactome" id="R-HSA-6802952">
    <property type="pathway name" value="Signaling by BRAF and RAF1 fusions"/>
</dbReference>
<dbReference type="Reactome" id="R-HSA-6802955">
    <property type="pathway name" value="Paradoxical activation of RAF signaling by kinase inactive BRAF"/>
</dbReference>
<dbReference type="Reactome" id="R-HSA-8875555">
    <property type="pathway name" value="MET activates RAP1 and RAC1"/>
</dbReference>
<dbReference type="Reactome" id="R-HSA-9649948">
    <property type="pathway name" value="Signaling downstream of RAS mutants"/>
</dbReference>
<dbReference type="Reactome" id="R-HSA-9656223">
    <property type="pathway name" value="Signaling by RAF1 mutants"/>
</dbReference>
<dbReference type="SignaLink" id="P62834"/>
<dbReference type="SIGNOR" id="P62834"/>
<dbReference type="BioGRID-ORCS" id="5906">
    <property type="hits" value="36 hits in 1124 CRISPR screens"/>
</dbReference>
<dbReference type="CD-CODE" id="FB4E32DD">
    <property type="entry name" value="Presynaptic clusters and postsynaptic densities"/>
</dbReference>
<dbReference type="ChiTaRS" id="RAP1A">
    <property type="organism name" value="human"/>
</dbReference>
<dbReference type="EvolutionaryTrace" id="P62834"/>
<dbReference type="GeneWiki" id="RAP1A"/>
<dbReference type="GenomeRNAi" id="5906"/>
<dbReference type="Pharos" id="P62834">
    <property type="development level" value="Tchem"/>
</dbReference>
<dbReference type="PRO" id="PR:P62834"/>
<dbReference type="Proteomes" id="UP000005640">
    <property type="component" value="Chromosome 1"/>
</dbReference>
<dbReference type="RNAct" id="P62834">
    <property type="molecule type" value="protein"/>
</dbReference>
<dbReference type="Bgee" id="ENSG00000116473">
    <property type="expression patterns" value="Expressed in blood vessel layer and 214 other cell types or tissues"/>
</dbReference>
<dbReference type="ExpressionAtlas" id="P62834">
    <property type="expression patterns" value="baseline and differential"/>
</dbReference>
<dbReference type="GO" id="GO:0070161">
    <property type="term" value="C:anchoring junction"/>
    <property type="evidence" value="ECO:0007669"/>
    <property type="project" value="UniProtKB-SubCell"/>
</dbReference>
<dbReference type="GO" id="GO:0030054">
    <property type="term" value="C:cell junction"/>
    <property type="evidence" value="ECO:0000250"/>
    <property type="project" value="UniProtKB"/>
</dbReference>
<dbReference type="GO" id="GO:0005737">
    <property type="term" value="C:cytoplasm"/>
    <property type="evidence" value="ECO:0000314"/>
    <property type="project" value="UniProtKB"/>
</dbReference>
<dbReference type="GO" id="GO:0005829">
    <property type="term" value="C:cytosol"/>
    <property type="evidence" value="ECO:0000304"/>
    <property type="project" value="Reactome"/>
</dbReference>
<dbReference type="GO" id="GO:0005769">
    <property type="term" value="C:early endosome"/>
    <property type="evidence" value="ECO:0000250"/>
    <property type="project" value="UniProtKB"/>
</dbReference>
<dbReference type="GO" id="GO:0010008">
    <property type="term" value="C:endosome membrane"/>
    <property type="evidence" value="ECO:0000304"/>
    <property type="project" value="Reactome"/>
</dbReference>
<dbReference type="GO" id="GO:0070062">
    <property type="term" value="C:extracellular exosome"/>
    <property type="evidence" value="ECO:0007005"/>
    <property type="project" value="UniProtKB"/>
</dbReference>
<dbReference type="GO" id="GO:0098978">
    <property type="term" value="C:glutamatergic synapse"/>
    <property type="evidence" value="ECO:0000314"/>
    <property type="project" value="SynGO"/>
</dbReference>
<dbReference type="GO" id="GO:0032045">
    <property type="term" value="C:guanyl-nucleotide exchange factor complex"/>
    <property type="evidence" value="ECO:0007669"/>
    <property type="project" value="Ensembl"/>
</dbReference>
<dbReference type="GO" id="GO:0005770">
    <property type="term" value="C:late endosome"/>
    <property type="evidence" value="ECO:0000250"/>
    <property type="project" value="UniProtKB"/>
</dbReference>
<dbReference type="GO" id="GO:0043005">
    <property type="term" value="C:neuron projection"/>
    <property type="evidence" value="ECO:0007669"/>
    <property type="project" value="Ensembl"/>
</dbReference>
<dbReference type="GO" id="GO:0048471">
    <property type="term" value="C:perinuclear region of cytoplasm"/>
    <property type="evidence" value="ECO:0000314"/>
    <property type="project" value="UniProtKB"/>
</dbReference>
<dbReference type="GO" id="GO:0045335">
    <property type="term" value="C:phagocytic vesicle"/>
    <property type="evidence" value="ECO:0007669"/>
    <property type="project" value="Ensembl"/>
</dbReference>
<dbReference type="GO" id="GO:0005886">
    <property type="term" value="C:plasma membrane"/>
    <property type="evidence" value="ECO:0000318"/>
    <property type="project" value="GO_Central"/>
</dbReference>
<dbReference type="GO" id="GO:0098793">
    <property type="term" value="C:presynapse"/>
    <property type="evidence" value="ECO:0007669"/>
    <property type="project" value="GOC"/>
</dbReference>
<dbReference type="GO" id="GO:0035579">
    <property type="term" value="C:specific granule membrane"/>
    <property type="evidence" value="ECO:0000304"/>
    <property type="project" value="Reactome"/>
</dbReference>
<dbReference type="GO" id="GO:0097225">
    <property type="term" value="C:sperm midpiece"/>
    <property type="evidence" value="ECO:0000250"/>
    <property type="project" value="UniProtKB"/>
</dbReference>
<dbReference type="GO" id="GO:0003925">
    <property type="term" value="F:G protein activity"/>
    <property type="evidence" value="ECO:0007669"/>
    <property type="project" value="UniProtKB-EC"/>
</dbReference>
<dbReference type="GO" id="GO:0019003">
    <property type="term" value="F:GDP binding"/>
    <property type="evidence" value="ECO:0000318"/>
    <property type="project" value="GO_Central"/>
</dbReference>
<dbReference type="GO" id="GO:0005525">
    <property type="term" value="F:GTP binding"/>
    <property type="evidence" value="ECO:0000318"/>
    <property type="project" value="GO_Central"/>
</dbReference>
<dbReference type="GO" id="GO:0003924">
    <property type="term" value="F:GTPase activity"/>
    <property type="evidence" value="ECO:0000318"/>
    <property type="project" value="GO_Central"/>
</dbReference>
<dbReference type="GO" id="GO:0005085">
    <property type="term" value="F:guanyl-nucleotide exchange factor activity"/>
    <property type="evidence" value="ECO:0000250"/>
    <property type="project" value="UniProtKB"/>
</dbReference>
<dbReference type="GO" id="GO:0044877">
    <property type="term" value="F:protein-containing complex binding"/>
    <property type="evidence" value="ECO:0000314"/>
    <property type="project" value="MGI"/>
</dbReference>
<dbReference type="GO" id="GO:0031267">
    <property type="term" value="F:small GTPase binding"/>
    <property type="evidence" value="ECO:0007669"/>
    <property type="project" value="Ensembl"/>
</dbReference>
<dbReference type="GO" id="GO:0071320">
    <property type="term" value="P:cellular response to cAMP"/>
    <property type="evidence" value="ECO:0000314"/>
    <property type="project" value="UniProtKB"/>
</dbReference>
<dbReference type="GO" id="GO:1990090">
    <property type="term" value="P:cellular response to nerve growth factor stimulus"/>
    <property type="evidence" value="ECO:0000250"/>
    <property type="project" value="UniProtKB"/>
</dbReference>
<dbReference type="GO" id="GO:0071466">
    <property type="term" value="P:cellular response to xenobiotic stimulus"/>
    <property type="evidence" value="ECO:0007669"/>
    <property type="project" value="Ensembl"/>
</dbReference>
<dbReference type="GO" id="GO:0061028">
    <property type="term" value="P:establishment of endothelial barrier"/>
    <property type="evidence" value="ECO:0000315"/>
    <property type="project" value="UniProtKB"/>
</dbReference>
<dbReference type="GO" id="GO:0097421">
    <property type="term" value="P:liver regeneration"/>
    <property type="evidence" value="ECO:0007669"/>
    <property type="project" value="Ensembl"/>
</dbReference>
<dbReference type="GO" id="GO:0032966">
    <property type="term" value="P:negative regulation of collagen biosynthetic process"/>
    <property type="evidence" value="ECO:0007669"/>
    <property type="project" value="Ensembl"/>
</dbReference>
<dbReference type="GO" id="GO:2000301">
    <property type="term" value="P:negative regulation of synaptic vesicle exocytosis"/>
    <property type="evidence" value="ECO:0000318"/>
    <property type="project" value="GO_Central"/>
</dbReference>
<dbReference type="GO" id="GO:0038180">
    <property type="term" value="P:nerve growth factor signaling pathway"/>
    <property type="evidence" value="ECO:0000250"/>
    <property type="project" value="UniProtKB"/>
</dbReference>
<dbReference type="GO" id="GO:0007399">
    <property type="term" value="P:nervous system development"/>
    <property type="evidence" value="ECO:0007669"/>
    <property type="project" value="UniProtKB-KW"/>
</dbReference>
<dbReference type="GO" id="GO:0046326">
    <property type="term" value="P:positive regulation of D-glucose import"/>
    <property type="evidence" value="ECO:0007669"/>
    <property type="project" value="Ensembl"/>
</dbReference>
<dbReference type="GO" id="GO:0070374">
    <property type="term" value="P:positive regulation of ERK1 and ERK2 cascade"/>
    <property type="evidence" value="ECO:0000250"/>
    <property type="project" value="UniProtKB"/>
</dbReference>
<dbReference type="GO" id="GO:0060369">
    <property type="term" value="P:positive regulation of Fc receptor mediated stimulatory signaling pathway"/>
    <property type="evidence" value="ECO:0007669"/>
    <property type="project" value="Ensembl"/>
</dbReference>
<dbReference type="GO" id="GO:0043547">
    <property type="term" value="P:positive regulation of GTPase activity"/>
    <property type="evidence" value="ECO:0000250"/>
    <property type="project" value="UniProtKB"/>
</dbReference>
<dbReference type="GO" id="GO:0010976">
    <property type="term" value="P:positive regulation of neuron projection development"/>
    <property type="evidence" value="ECO:0000250"/>
    <property type="project" value="UniProtKB"/>
</dbReference>
<dbReference type="GO" id="GO:0050766">
    <property type="term" value="P:positive regulation of phagocytosis"/>
    <property type="evidence" value="ECO:0007669"/>
    <property type="project" value="Ensembl"/>
</dbReference>
<dbReference type="GO" id="GO:0045860">
    <property type="term" value="P:positive regulation of protein kinase activity"/>
    <property type="evidence" value="ECO:0000250"/>
    <property type="project" value="UniProtKB"/>
</dbReference>
<dbReference type="GO" id="GO:2001214">
    <property type="term" value="P:positive regulation of vasculogenesis"/>
    <property type="evidence" value="ECO:0000250"/>
    <property type="project" value="UniProtKB"/>
</dbReference>
<dbReference type="GO" id="GO:0072659">
    <property type="term" value="P:protein localization to plasma membrane"/>
    <property type="evidence" value="ECO:0000314"/>
    <property type="project" value="GO_Central"/>
</dbReference>
<dbReference type="GO" id="GO:0032486">
    <property type="term" value="P:Rap protein signal transduction"/>
    <property type="evidence" value="ECO:0000315"/>
    <property type="project" value="UniProtKB"/>
</dbReference>
<dbReference type="GO" id="GO:1901888">
    <property type="term" value="P:regulation of cell junction assembly"/>
    <property type="evidence" value="ECO:0000315"/>
    <property type="project" value="UniProtKB"/>
</dbReference>
<dbReference type="GO" id="GO:0098696">
    <property type="term" value="P:regulation of neurotransmitter receptor localization to postsynaptic specialization membrane"/>
    <property type="evidence" value="ECO:0000314"/>
    <property type="project" value="SynGO"/>
</dbReference>
<dbReference type="GO" id="GO:0097327">
    <property type="term" value="P:response to antineoplastic agent"/>
    <property type="evidence" value="ECO:0007669"/>
    <property type="project" value="Ensembl"/>
</dbReference>
<dbReference type="GO" id="GO:0009743">
    <property type="term" value="P:response to carbohydrate"/>
    <property type="evidence" value="ECO:0007669"/>
    <property type="project" value="Ensembl"/>
</dbReference>
<dbReference type="GO" id="GO:0016079">
    <property type="term" value="P:synaptic vesicle exocytosis"/>
    <property type="evidence" value="ECO:0007669"/>
    <property type="project" value="Ensembl"/>
</dbReference>
<dbReference type="CDD" id="cd04175">
    <property type="entry name" value="Rap1"/>
    <property type="match status" value="1"/>
</dbReference>
<dbReference type="FunFam" id="3.40.50.300:FF:000182">
    <property type="entry name" value="ras-related protein Rap-1b"/>
    <property type="match status" value="1"/>
</dbReference>
<dbReference type="Gene3D" id="3.40.50.300">
    <property type="entry name" value="P-loop containing nucleotide triphosphate hydrolases"/>
    <property type="match status" value="1"/>
</dbReference>
<dbReference type="InterPro" id="IPR027417">
    <property type="entry name" value="P-loop_NTPase"/>
</dbReference>
<dbReference type="InterPro" id="IPR038851">
    <property type="entry name" value="Rap1"/>
</dbReference>
<dbReference type="InterPro" id="IPR005225">
    <property type="entry name" value="Small_GTP-bd"/>
</dbReference>
<dbReference type="InterPro" id="IPR001806">
    <property type="entry name" value="Small_GTPase"/>
</dbReference>
<dbReference type="InterPro" id="IPR020849">
    <property type="entry name" value="Small_GTPase_Ras-type"/>
</dbReference>
<dbReference type="NCBIfam" id="TIGR00231">
    <property type="entry name" value="small_GTP"/>
    <property type="match status" value="1"/>
</dbReference>
<dbReference type="PANTHER" id="PTHR24070">
    <property type="entry name" value="RAS, DI-RAS, AND RHEB FAMILY MEMBERS OF SMALL GTPASE SUPERFAMILY"/>
    <property type="match status" value="1"/>
</dbReference>
<dbReference type="Pfam" id="PF00071">
    <property type="entry name" value="Ras"/>
    <property type="match status" value="1"/>
</dbReference>
<dbReference type="PRINTS" id="PR00449">
    <property type="entry name" value="RASTRNSFRMNG"/>
</dbReference>
<dbReference type="SMART" id="SM00175">
    <property type="entry name" value="RAB"/>
    <property type="match status" value="1"/>
</dbReference>
<dbReference type="SMART" id="SM00176">
    <property type="entry name" value="RAN"/>
    <property type="match status" value="1"/>
</dbReference>
<dbReference type="SMART" id="SM00173">
    <property type="entry name" value="RAS"/>
    <property type="match status" value="1"/>
</dbReference>
<dbReference type="SMART" id="SM00174">
    <property type="entry name" value="RHO"/>
    <property type="match status" value="1"/>
</dbReference>
<dbReference type="SUPFAM" id="SSF52540">
    <property type="entry name" value="P-loop containing nucleoside triphosphate hydrolases"/>
    <property type="match status" value="1"/>
</dbReference>
<dbReference type="PROSITE" id="PS51421">
    <property type="entry name" value="RAS"/>
    <property type="match status" value="1"/>
</dbReference>
<sequence length="184" mass="20987">MREYKLVVLGSGGVGKSALTVQFVQGIFVEKYDPTIEDSYRKQVEVDCQQCMLEILDTAGTEQFTAMRDLYMKNGQGFALVYSITAQSTFNDLQDLREQILRVKDTEDVPMILVGNKCDLEDERVVGKEQGQNLARQWCNCAFLESSAKSKINVNEIFYDLVRQINRKTPVEKKKPKKKSCLLL</sequence>
<comment type="function">
    <text evidence="10 13 14">Counteracts the mitogenic function of Ras, at least partly because it can interact with Ras GAPs and RAF in a competitive manner. Together with ITGB1BP1, regulates KRIT1 localization to microtubules and membranes (PubMed:17916086). Plays a role in nerve growth factor (NGF)-induced neurite outgrowth. Plays a role in the regulation of embryonic blood vessel formation. Involved in the establishment of basal endothelial barrier function. Facilitates the progressive accumulation of CDH1 at mature desmosome junctions via cAMP-dependent signaling and its interaction with PKP3 (PubMed:25208567). May be involved in the regulation of the vascular endothelial growth factor receptor KDR expression at endothelial cell-cell junctions.</text>
</comment>
<comment type="catalytic activity">
    <reaction evidence="2">
        <text>GTP + H2O = GDP + phosphate + H(+)</text>
        <dbReference type="Rhea" id="RHEA:19669"/>
        <dbReference type="ChEBI" id="CHEBI:15377"/>
        <dbReference type="ChEBI" id="CHEBI:15378"/>
        <dbReference type="ChEBI" id="CHEBI:37565"/>
        <dbReference type="ChEBI" id="CHEBI:43474"/>
        <dbReference type="ChEBI" id="CHEBI:58189"/>
        <dbReference type="EC" id="3.6.5.2"/>
    </reaction>
</comment>
<comment type="activity regulation">
    <text>Activated by guanine nucleotide-exchange factors (GEF) EPAC and EPAC2 in a cAMP-dependent manner, and GFR.</text>
</comment>
<comment type="subunit">
    <text evidence="3 4 5 6 7 8 9 10 12 14">Found in a complex, at least composed of ITGB1BP1, KRIT1 and RAP1A (PubMed:17916086). Interacts (active GTP-bound form preferentially) with KRIT1 (via C-terminus FERM domain); the interaction does not induce the opening conformation of KRIT1 (PubMed:17916086). Found in a complex composed of CDH1, RAP1A and PKP3; PKP3 acts as a scaffold protein within the complex, the complex is required for CDH1 localization to mature desmosome cell junctions (PubMed:25208567). In its GTP-bound form interacts with PLCE1 and RADIL (PubMed:11022048, PubMed:12444546, PubMed:17704304). Interacts with SGSM1, SGSM2 and SGSM3 (PubMed:17509819). Interacts (via GTP-bound active form) with RAPGEF2 (via Ras-associating domain) (PubMed:10608844, PubMed:11359771). Interacts with TBC1D21 (By similarity). Interacts with RAP1GDS1 (PubMed:20709748).</text>
</comment>
<comment type="interaction">
    <interactant intactId="EBI-491414">
        <id>P62834</id>
    </interactant>
    <interactant intactId="EBI-365996">
        <id>P04049</id>
        <label>RAF1</label>
    </interactant>
    <organismsDiffer>false</organismsDiffer>
    <experiments>2</experiments>
</comment>
<comment type="interaction">
    <interactant intactId="EBI-491414">
        <id>P62834</id>
    </interactant>
    <interactant intactId="EBI-960502">
        <id>Q8WWW0-2</id>
        <label>RASSF5</label>
    </interactant>
    <organismsDiffer>false</organismsDiffer>
    <experiments>3</experiments>
</comment>
<comment type="interaction">
    <interactant intactId="EBI-491414">
        <id>P62834</id>
    </interactant>
    <interactant intactId="EBI-960530">
        <id>Q5EBH1</id>
        <label>Rassf5</label>
    </interactant>
    <organismsDiffer>true</organismsDiffer>
    <experiments>3</experiments>
</comment>
<comment type="subcellular location">
    <subcellularLocation>
        <location evidence="6">Cell membrane</location>
        <topology evidence="6">Lipid-anchor</topology>
    </subcellularLocation>
    <subcellularLocation>
        <location evidence="6">Cytoplasm</location>
    </subcellularLocation>
    <subcellularLocation>
        <location evidence="6">Cytoplasm</location>
        <location evidence="6">Perinuclear region</location>
    </subcellularLocation>
    <subcellularLocation>
        <location evidence="1">Cell junction</location>
    </subcellularLocation>
    <subcellularLocation>
        <location evidence="1">Early endosome</location>
    </subcellularLocation>
    <text evidence="1">Recruited from early endosome to late endosome compartment after nerve growth factor (NGF) stimulation. Localized with RAPGEF2 at cell-cell junctions (By similarity). Colocalized with RAPGEF2 in the perinuclear region.</text>
</comment>
<comment type="similarity">
    <text evidence="17">Belongs to the small GTPase superfamily. Ras family.</text>
</comment>
<comment type="online information" name="Atlas of Genetics and Cytogenetics in Oncology and Haematology">
    <link uri="https://atlasgeneticsoncology.org/gene/272/RAP1A"/>
</comment>
<protein>
    <recommendedName>
        <fullName>Ras-related protein Rap-1A</fullName>
        <ecNumber evidence="2">3.6.5.2</ecNumber>
    </recommendedName>
    <alternativeName>
        <fullName>C21KG</fullName>
    </alternativeName>
    <alternativeName>
        <fullName>G-22K</fullName>
    </alternativeName>
    <alternativeName>
        <fullName>GTP-binding protein smg p21A</fullName>
    </alternativeName>
    <alternativeName>
        <fullName>Ras-related protein Krev-1</fullName>
    </alternativeName>
</protein>
<name>RAP1A_HUMAN</name>